<protein>
    <recommendedName>
        <fullName>Probable glycosyltransferase At3g42180</fullName>
        <ecNumber>2.4.-.-</ecNumber>
    </recommendedName>
</protein>
<gene>
    <name type="ordered locus">At3g42180</name>
    <name type="ORF">T27B3.50</name>
</gene>
<organism>
    <name type="scientific">Arabidopsis thaliana</name>
    <name type="common">Mouse-ear cress</name>
    <dbReference type="NCBI Taxonomy" id="3702"/>
    <lineage>
        <taxon>Eukaryota</taxon>
        <taxon>Viridiplantae</taxon>
        <taxon>Streptophyta</taxon>
        <taxon>Embryophyta</taxon>
        <taxon>Tracheophyta</taxon>
        <taxon>Spermatophyta</taxon>
        <taxon>Magnoliopsida</taxon>
        <taxon>eudicotyledons</taxon>
        <taxon>Gunneridae</taxon>
        <taxon>Pentapetalae</taxon>
        <taxon>rosids</taxon>
        <taxon>malvids</taxon>
        <taxon>Brassicales</taxon>
        <taxon>Brassicaceae</taxon>
        <taxon>Camelineae</taxon>
        <taxon>Arabidopsis</taxon>
    </lineage>
</organism>
<dbReference type="EC" id="2.4.-.-"/>
<dbReference type="EMBL" id="AL137079">
    <property type="protein sequence ID" value="CAB68119.1"/>
    <property type="status" value="ALT_SEQ"/>
    <property type="molecule type" value="Genomic_DNA"/>
</dbReference>
<dbReference type="EMBL" id="CP002686">
    <property type="protein sequence ID" value="AEE77729.1"/>
    <property type="molecule type" value="Genomic_DNA"/>
</dbReference>
<dbReference type="EMBL" id="BX824909">
    <property type="status" value="NOT_ANNOTATED_CDS"/>
    <property type="molecule type" value="mRNA"/>
</dbReference>
<dbReference type="EMBL" id="BT026120">
    <property type="protein sequence ID" value="ABG48476.1"/>
    <property type="molecule type" value="mRNA"/>
</dbReference>
<dbReference type="PIR" id="T46112">
    <property type="entry name" value="T46112"/>
</dbReference>
<dbReference type="RefSeq" id="NP_189804.4">
    <molecule id="Q3EAR7-1"/>
    <property type="nucleotide sequence ID" value="NM_114085.4"/>
</dbReference>
<dbReference type="SMR" id="Q3EAR7"/>
<dbReference type="FunCoup" id="Q3EAR7">
    <property type="interactions" value="7"/>
</dbReference>
<dbReference type="STRING" id="3702.Q3EAR7"/>
<dbReference type="CAZy" id="GT47">
    <property type="family name" value="Glycosyltransferase Family 47"/>
</dbReference>
<dbReference type="GlyGen" id="Q3EAR7">
    <property type="glycosylation" value="5 sites"/>
</dbReference>
<dbReference type="PaxDb" id="3702-AT3G42180.1"/>
<dbReference type="ProteomicsDB" id="248547">
    <molecule id="Q3EAR7-1"/>
</dbReference>
<dbReference type="EnsemblPlants" id="AT3G42180.1">
    <molecule id="Q3EAR7-1"/>
    <property type="protein sequence ID" value="AT3G42180.1"/>
    <property type="gene ID" value="AT3G42180"/>
</dbReference>
<dbReference type="GeneID" id="823191"/>
<dbReference type="Gramene" id="AT3G42180.1">
    <molecule id="Q3EAR7-1"/>
    <property type="protein sequence ID" value="AT3G42180.1"/>
    <property type="gene ID" value="AT3G42180"/>
</dbReference>
<dbReference type="KEGG" id="ath:AT3G42180"/>
<dbReference type="Araport" id="AT3G42180"/>
<dbReference type="TAIR" id="AT3G42180"/>
<dbReference type="eggNOG" id="KOG1021">
    <property type="taxonomic scope" value="Eukaryota"/>
</dbReference>
<dbReference type="HOGENOM" id="CLU_025166_1_1_1"/>
<dbReference type="InParanoid" id="Q3EAR7"/>
<dbReference type="PhylomeDB" id="Q3EAR7"/>
<dbReference type="BioCyc" id="ARA:AT3G42180-MONOMER"/>
<dbReference type="PRO" id="PR:Q3EAR7"/>
<dbReference type="Proteomes" id="UP000006548">
    <property type="component" value="Chromosome 3"/>
</dbReference>
<dbReference type="ExpressionAtlas" id="Q3EAR7">
    <property type="expression patterns" value="baseline and differential"/>
</dbReference>
<dbReference type="GO" id="GO:0000139">
    <property type="term" value="C:Golgi membrane"/>
    <property type="evidence" value="ECO:0007669"/>
    <property type="project" value="UniProtKB-SubCell"/>
</dbReference>
<dbReference type="GO" id="GO:0016757">
    <property type="term" value="F:glycosyltransferase activity"/>
    <property type="evidence" value="ECO:0007669"/>
    <property type="project" value="UniProtKB-KW"/>
</dbReference>
<dbReference type="GO" id="GO:0071555">
    <property type="term" value="P:cell wall organization"/>
    <property type="evidence" value="ECO:0007669"/>
    <property type="project" value="UniProtKB-KW"/>
</dbReference>
<dbReference type="GO" id="GO:0006486">
    <property type="term" value="P:protein glycosylation"/>
    <property type="evidence" value="ECO:0007669"/>
    <property type="project" value="InterPro"/>
</dbReference>
<dbReference type="InterPro" id="IPR004263">
    <property type="entry name" value="Exostosin"/>
</dbReference>
<dbReference type="InterPro" id="IPR040911">
    <property type="entry name" value="Exostosin_GT47"/>
</dbReference>
<dbReference type="PANTHER" id="PTHR11062:SF320">
    <property type="entry name" value="BNAA09G42910D PROTEIN"/>
    <property type="match status" value="1"/>
</dbReference>
<dbReference type="PANTHER" id="PTHR11062">
    <property type="entry name" value="EXOSTOSIN HEPARAN SULFATE GLYCOSYLTRANSFERASE -RELATED"/>
    <property type="match status" value="1"/>
</dbReference>
<dbReference type="Pfam" id="PF03016">
    <property type="entry name" value="Exostosin_GT47"/>
    <property type="match status" value="1"/>
</dbReference>
<proteinExistence type="evidence at transcript level"/>
<comment type="function">
    <text>May be involved in cell wall biosynthesis.</text>
</comment>
<comment type="subcellular location">
    <subcellularLocation>
        <location evidence="1">Golgi apparatus membrane</location>
        <topology evidence="1">Single-pass type II membrane protein</topology>
    </subcellularLocation>
</comment>
<comment type="alternative products">
    <event type="alternative splicing"/>
    <isoform>
        <id>Q3EAR7-1</id>
        <name>1</name>
        <sequence type="displayed"/>
    </isoform>
    <text>A number of isoforms are produced. According to EST sequences.</text>
</comment>
<comment type="disruption phenotype">
    <text evidence="3">No visible phenotype.</text>
</comment>
<comment type="similarity">
    <text evidence="4">Belongs to the glycosyltransferase 47 family.</text>
</comment>
<comment type="sequence caution" evidence="4">
    <conflict type="erroneous gene model prediction">
        <sequence resource="EMBL-CDS" id="CAB68119"/>
    </conflict>
</comment>
<sequence length="470" mass="54268">MSNNSSKSFCLLGFPLILILLLSFLLFSSFPNNESPPQQFFSSLTMSSLLVHTNALQSSSSSSSLYSPPITVKRRSNLEKREEELRKARAAIRRAVRFKNCTSNEEVITYIPTGQIYRNSFAFHQSHIEMMKTFKVWSYKEGEQPLVHDGPVNDIYGIEGQFIDELSYVMGGPSGRFRASRPEEAHAFFLPFSVANIVHYVYQPITSPADFNRARLHRIFNDYVDVVAHKHPFWNQSNGADHFMVSCHDWAPDVPDSKPEFFKNFMRGLCNANTSEGFRRNIDFSIPEINIPKRKLKPPFMGQNPENRTILAFFAGRAHGYIREVLFSHWKGKDKDVQVYDHLTKGQNYHELIGHSKFCLCPSGYEVASPREVEAIYSGCVPVVISDNYSLPFNDVLDWSKFSVEIPVDKIPDIKKILQEIPHDKYLRMYRNVMKVRRHFVVNRPAQPFDVIHMILHSVWLRRLNIRLPS</sequence>
<keyword id="KW-0025">Alternative splicing</keyword>
<keyword id="KW-0961">Cell wall biogenesis/degradation</keyword>
<keyword id="KW-0325">Glycoprotein</keyword>
<keyword id="KW-0328">Glycosyltransferase</keyword>
<keyword id="KW-0333">Golgi apparatus</keyword>
<keyword id="KW-0472">Membrane</keyword>
<keyword id="KW-1185">Reference proteome</keyword>
<keyword id="KW-0735">Signal-anchor</keyword>
<keyword id="KW-0808">Transferase</keyword>
<keyword id="KW-0812">Transmembrane</keyword>
<keyword id="KW-1133">Transmembrane helix</keyword>
<feature type="chain" id="PRO_0000392293" description="Probable glycosyltransferase At3g42180">
    <location>
        <begin position="1"/>
        <end position="470"/>
    </location>
</feature>
<feature type="topological domain" description="Cytoplasmic" evidence="2">
    <location>
        <begin position="1"/>
        <end position="7"/>
    </location>
</feature>
<feature type="transmembrane region" description="Helical; Signal-anchor for type II membrane protein" evidence="2">
    <location>
        <begin position="8"/>
        <end position="28"/>
    </location>
</feature>
<feature type="topological domain" description="Lumenal" evidence="2">
    <location>
        <begin position="29"/>
        <end position="470"/>
    </location>
</feature>
<feature type="glycosylation site" description="N-linked (GlcNAc...) asparagine" evidence="2">
    <location>
        <position position="100"/>
    </location>
</feature>
<feature type="glycosylation site" description="N-linked (GlcNAc...) asparagine" evidence="2">
    <location>
        <position position="235"/>
    </location>
</feature>
<feature type="glycosylation site" description="N-linked (GlcNAc...) asparagine" evidence="2">
    <location>
        <position position="273"/>
    </location>
</feature>
<feature type="glycosylation site" description="N-linked (GlcNAc...) asparagine" evidence="2">
    <location>
        <position position="307"/>
    </location>
</feature>
<feature type="glycosylation site" description="N-linked (GlcNAc...) asparagine" evidence="2">
    <location>
        <position position="388"/>
    </location>
</feature>
<feature type="sequence conflict" description="In Ref. 3; BX824909." evidence="4" ref="3">
    <original>K</original>
    <variation>R</variation>
    <location>
        <position position="7"/>
    </location>
</feature>
<feature type="sequence conflict" description="In Ref. 3; BX824909." evidence="4" ref="3">
    <original>G</original>
    <variation>C</variation>
    <location>
        <position position="175"/>
    </location>
</feature>
<reference key="1">
    <citation type="journal article" date="2000" name="Nature">
        <title>Sequence and analysis of chromosome 3 of the plant Arabidopsis thaliana.</title>
        <authorList>
            <person name="Salanoubat M."/>
            <person name="Lemcke K."/>
            <person name="Rieger M."/>
            <person name="Ansorge W."/>
            <person name="Unseld M."/>
            <person name="Fartmann B."/>
            <person name="Valle G."/>
            <person name="Bloecker H."/>
            <person name="Perez-Alonso M."/>
            <person name="Obermaier B."/>
            <person name="Delseny M."/>
            <person name="Boutry M."/>
            <person name="Grivell L.A."/>
            <person name="Mache R."/>
            <person name="Puigdomenech P."/>
            <person name="De Simone V."/>
            <person name="Choisne N."/>
            <person name="Artiguenave F."/>
            <person name="Robert C."/>
            <person name="Brottier P."/>
            <person name="Wincker P."/>
            <person name="Cattolico L."/>
            <person name="Weissenbach J."/>
            <person name="Saurin W."/>
            <person name="Quetier F."/>
            <person name="Schaefer M."/>
            <person name="Mueller-Auer S."/>
            <person name="Gabel C."/>
            <person name="Fuchs M."/>
            <person name="Benes V."/>
            <person name="Wurmbach E."/>
            <person name="Drzonek H."/>
            <person name="Erfle H."/>
            <person name="Jordan N."/>
            <person name="Bangert S."/>
            <person name="Wiedelmann R."/>
            <person name="Kranz H."/>
            <person name="Voss H."/>
            <person name="Holland R."/>
            <person name="Brandt P."/>
            <person name="Nyakatura G."/>
            <person name="Vezzi A."/>
            <person name="D'Angelo M."/>
            <person name="Pallavicini A."/>
            <person name="Toppo S."/>
            <person name="Simionati B."/>
            <person name="Conrad A."/>
            <person name="Hornischer K."/>
            <person name="Kauer G."/>
            <person name="Loehnert T.-H."/>
            <person name="Nordsiek G."/>
            <person name="Reichelt J."/>
            <person name="Scharfe M."/>
            <person name="Schoen O."/>
            <person name="Bargues M."/>
            <person name="Terol J."/>
            <person name="Climent J."/>
            <person name="Navarro P."/>
            <person name="Collado C."/>
            <person name="Perez-Perez A."/>
            <person name="Ottenwaelder B."/>
            <person name="Duchemin D."/>
            <person name="Cooke R."/>
            <person name="Laudie M."/>
            <person name="Berger-Llauro C."/>
            <person name="Purnelle B."/>
            <person name="Masuy D."/>
            <person name="de Haan M."/>
            <person name="Maarse A.C."/>
            <person name="Alcaraz J.-P."/>
            <person name="Cottet A."/>
            <person name="Casacuberta E."/>
            <person name="Monfort A."/>
            <person name="Argiriou A."/>
            <person name="Flores M."/>
            <person name="Liguori R."/>
            <person name="Vitale D."/>
            <person name="Mannhaupt G."/>
            <person name="Haase D."/>
            <person name="Schoof H."/>
            <person name="Rudd S."/>
            <person name="Zaccaria P."/>
            <person name="Mewes H.-W."/>
            <person name="Mayer K.F.X."/>
            <person name="Kaul S."/>
            <person name="Town C.D."/>
            <person name="Koo H.L."/>
            <person name="Tallon L.J."/>
            <person name="Jenkins J."/>
            <person name="Rooney T."/>
            <person name="Rizzo M."/>
            <person name="Walts A."/>
            <person name="Utterback T."/>
            <person name="Fujii C.Y."/>
            <person name="Shea T.P."/>
            <person name="Creasy T.H."/>
            <person name="Haas B."/>
            <person name="Maiti R."/>
            <person name="Wu D."/>
            <person name="Peterson J."/>
            <person name="Van Aken S."/>
            <person name="Pai G."/>
            <person name="Militscher J."/>
            <person name="Sellers P."/>
            <person name="Gill J.E."/>
            <person name="Feldblyum T.V."/>
            <person name="Preuss D."/>
            <person name="Lin X."/>
            <person name="Nierman W.C."/>
            <person name="Salzberg S.L."/>
            <person name="White O."/>
            <person name="Venter J.C."/>
            <person name="Fraser C.M."/>
            <person name="Kaneko T."/>
            <person name="Nakamura Y."/>
            <person name="Sato S."/>
            <person name="Kato T."/>
            <person name="Asamizu E."/>
            <person name="Sasamoto S."/>
            <person name="Kimura T."/>
            <person name="Idesawa K."/>
            <person name="Kawashima K."/>
            <person name="Kishida Y."/>
            <person name="Kiyokawa C."/>
            <person name="Kohara M."/>
            <person name="Matsumoto M."/>
            <person name="Matsuno A."/>
            <person name="Muraki A."/>
            <person name="Nakayama S."/>
            <person name="Nakazaki N."/>
            <person name="Shinpo S."/>
            <person name="Takeuchi C."/>
            <person name="Wada T."/>
            <person name="Watanabe A."/>
            <person name="Yamada M."/>
            <person name="Yasuda M."/>
            <person name="Tabata S."/>
        </authorList>
    </citation>
    <scope>NUCLEOTIDE SEQUENCE [LARGE SCALE GENOMIC DNA]</scope>
    <source>
        <strain>cv. Columbia</strain>
    </source>
</reference>
<reference key="2">
    <citation type="journal article" date="2017" name="Plant J.">
        <title>Araport11: a complete reannotation of the Arabidopsis thaliana reference genome.</title>
        <authorList>
            <person name="Cheng C.Y."/>
            <person name="Krishnakumar V."/>
            <person name="Chan A.P."/>
            <person name="Thibaud-Nissen F."/>
            <person name="Schobel S."/>
            <person name="Town C.D."/>
        </authorList>
    </citation>
    <scope>GENOME REANNOTATION</scope>
    <source>
        <strain>cv. Columbia</strain>
    </source>
</reference>
<reference key="3">
    <citation type="journal article" date="2004" name="Genome Res.">
        <title>Whole genome sequence comparisons and 'full-length' cDNA sequences: a combined approach to evaluate and improve Arabidopsis genome annotation.</title>
        <authorList>
            <person name="Castelli V."/>
            <person name="Aury J.-M."/>
            <person name="Jaillon O."/>
            <person name="Wincker P."/>
            <person name="Clepet C."/>
            <person name="Menard M."/>
            <person name="Cruaud C."/>
            <person name="Quetier F."/>
            <person name="Scarpelli C."/>
            <person name="Schaechter V."/>
            <person name="Temple G."/>
            <person name="Caboche M."/>
            <person name="Weissenbach J."/>
            <person name="Salanoubat M."/>
        </authorList>
    </citation>
    <scope>NUCLEOTIDE SEQUENCE [LARGE SCALE MRNA] OF 4-470</scope>
    <source>
        <strain>cv. Columbia</strain>
    </source>
</reference>
<reference key="4">
    <citation type="submission" date="2006-07" db="EMBL/GenBank/DDBJ databases">
        <title>Arabidopsis ORF clones.</title>
        <authorList>
            <person name="Kim C.J."/>
            <person name="Chen H."/>
            <person name="Quinitio C."/>
            <person name="Shinn P."/>
            <person name="Ecker J.R."/>
        </authorList>
    </citation>
    <scope>NUCLEOTIDE SEQUENCE [LARGE SCALE MRNA] OF 46-470</scope>
</reference>
<reference key="5">
    <citation type="journal article" date="2008" name="Plant Cell">
        <title>Identification of a xylogalacturonan xylosyltransferase involved in pectin biosynthesis in Arabidopsis.</title>
        <authorList>
            <person name="Jensen J.K."/>
            <person name="Sorensen S.O."/>
            <person name="Harholt J."/>
            <person name="Geshi N."/>
            <person name="Sakuragi Y."/>
            <person name="Moller I."/>
            <person name="Zandleven J."/>
            <person name="Bernal A.J."/>
            <person name="Jensen N.B."/>
            <person name="Sorensen C."/>
            <person name="Pauly M."/>
            <person name="Beldman G."/>
            <person name="Willats W.G."/>
            <person name="Scheller H.V."/>
        </authorList>
    </citation>
    <scope>DISRUPTION PHENOTYPE</scope>
</reference>
<accession>Q3EAR7</accession>
<accession>Q147H3</accession>
<accession>Q9M2N4</accession>
<evidence type="ECO:0000250" key="1"/>
<evidence type="ECO:0000255" key="2"/>
<evidence type="ECO:0000269" key="3">
    <source>
    </source>
</evidence>
<evidence type="ECO:0000305" key="4"/>
<name>GLYT2_ARATH</name>